<protein>
    <recommendedName>
        <fullName>Protein p74</fullName>
    </recommendedName>
</protein>
<dbReference type="EMBL" id="M97904">
    <property type="protein sequence ID" value="AAA46730.1"/>
    <property type="molecule type" value="Genomic_DNA"/>
</dbReference>
<dbReference type="PIR" id="S29849">
    <property type="entry name" value="S29849"/>
</dbReference>
<dbReference type="RefSeq" id="NP_848441.1">
    <property type="nucleotide sequence ID" value="NC_004778.3"/>
</dbReference>
<dbReference type="KEGG" id="vg:1482729"/>
<dbReference type="OrthoDB" id="2848at10239"/>
<dbReference type="GO" id="GO:0039679">
    <property type="term" value="C:viral occlusion body"/>
    <property type="evidence" value="ECO:0007669"/>
    <property type="project" value="UniProtKB-KW"/>
</dbReference>
<dbReference type="GO" id="GO:0019058">
    <property type="term" value="P:viral life cycle"/>
    <property type="evidence" value="ECO:0007669"/>
    <property type="project" value="InterPro"/>
</dbReference>
<dbReference type="InterPro" id="IPR007663">
    <property type="entry name" value="Baculo_p74"/>
</dbReference>
<dbReference type="InterPro" id="IPR013613">
    <property type="entry name" value="Baculo_p74_N"/>
</dbReference>
<dbReference type="Pfam" id="PF04583">
    <property type="entry name" value="Baculo_p74"/>
    <property type="match status" value="1"/>
</dbReference>
<dbReference type="Pfam" id="PF08404">
    <property type="entry name" value="Baculo_p74_N"/>
    <property type="match status" value="1"/>
</dbReference>
<keyword id="KW-0842">Viral occlusion body</keyword>
<keyword id="KW-0843">Virulence</keyword>
<name>VP74_NPVCF</name>
<sequence>MAVLTAVDLTNASRYAAHMHRLEFIGRWRERLPHILIDYTLRPASSEDDYYVPPKLRDRALAVKLAFSRRGCDSMSCYPFHETGVVSNQTEFAYTQTSETSVAYSQPACYHLDRAAAMREGAENEVQSAEFTYTPNNQCVLVDSTSKMYFNSPYLRTEEHTIMGVDDVPAFNVRPDPDPLFPERFKGEFNEAYCRRFGRDLMNGGCSFRWWESLIGFVLGDTIYVTFKMMANNIFSELRDFDYTAPSPLLPARPVADSNAVLAQWRAVRDRAVDWNFEKQFSEAPTLQQLGLLADNGGLMQLAYTAETGFAKTPIAYSARVTPRAVRDFGAPGRQLNDEELEAIIASFLEEYSLVFGIATDIGFDMLLTAFKTMLKKINTALIPALKRMLVSTSQRVTVRLLGETYKAAIVHSMNRIAIKTLTTAAKALTRIAIKASSVVGIVLILFTLADLVLALWDPFGYSNMFPREFPDDLSRTFLTAYFETLDANSSREIIEFLPEFFSDVVETDDDATFQSLFHLLDYVAALEVNSDGQMLHFTESNAIEDFDEATLVGQALASSSLYTRLEFMQYTFRQNTLLEMNKNNNRFNGAIASLFLTGTAVALAAFMLHKKLTFFVYFAIFLMLALYYLVKEPYEYFKTIDLLF</sequence>
<comment type="function">
    <text>Essential for virulence of baculovirus occlusion bodies for insect larvae.</text>
</comment>
<comment type="similarity">
    <text evidence="1">Belongs to the baculoviridae p74 family.</text>
</comment>
<reference key="1">
    <citation type="journal article" date="1993" name="Biochim. Biophys. Acta">
        <title>Nucleotide sequence of the p74 gene of a baculovirus pathogenic to the spruce budworm, Choristoneura fumiferana multicapsid nuclear polyhedrosis virus.</title>
        <authorList>
            <person name="Hill J.E."/>
            <person name="Kuzio J."/>
            <person name="Wilson J.A."/>
            <person name="Mackinnon E.A."/>
            <person name="Faulkner P."/>
        </authorList>
    </citation>
    <scope>NUCLEOTIDE SEQUENCE [GENOMIC DNA]</scope>
</reference>
<accession>P34053</accession>
<evidence type="ECO:0000305" key="1"/>
<organismHost>
    <name type="scientific">Choristoneura fumiferana</name>
    <name type="common">Spruce budworm moth</name>
    <name type="synonym">Archips fumiferana</name>
    <dbReference type="NCBI Taxonomy" id="7141"/>
</organismHost>
<organism>
    <name type="scientific">Choristoneura fumiferana nuclear polyhedrosis virus</name>
    <name type="common">CfMNPV</name>
    <dbReference type="NCBI Taxonomy" id="208973"/>
    <lineage>
        <taxon>Viruses</taxon>
        <taxon>Viruses incertae sedis</taxon>
        <taxon>Naldaviricetes</taxon>
        <taxon>Lefavirales</taxon>
        <taxon>Baculoviridae</taxon>
        <taxon>Alphabaculovirus</taxon>
        <taxon>Alphabaculovirus chofumiferanae</taxon>
    </lineage>
</organism>
<proteinExistence type="inferred from homology"/>
<gene>
    <name type="primary">P74</name>
</gene>
<feature type="chain" id="PRO_0000132918" description="Protein p74">
    <location>
        <begin position="1"/>
        <end position="645"/>
    </location>
</feature>